<protein>
    <recommendedName>
        <fullName>Uncharacterized killer plasmid pGKl-2 protein 1</fullName>
    </recommendedName>
</protein>
<feature type="chain" id="PRO_0000066277" description="Uncharacterized killer plasmid pGKl-2 protein 1">
    <location>
        <begin position="1"/>
        <end position="224"/>
    </location>
</feature>
<sequence length="224" mass="26743">MSYIDYLAYTGNTTFYDRFDGDLTSEHRIKCIINGCLINIMFSIRTIKEFPEEIKICQAAVSKFLTCGYVNDYLIEKYPPFYLWHKRFCDYDIYKMLMEKHPKLNYTVAKAAIMQRYNDLYFSFDFQPEEELIMTAALTENTEIYEDQINKAKKLGYCYSYLDYDNYCIKEEPGIEEIPDIEPKFNPFYVYVESGSKMEDVEYAVVNLVEEFKYLQMVYDMSKI</sequence>
<reference key="1">
    <citation type="journal article" date="1988" name="Nucleic Acids Res.">
        <title>Genome organization of the killer plasmid pGKL2 from Kluyveromyces lactis.</title>
        <authorList>
            <person name="Tommasino M."/>
            <person name="Ricci S."/>
            <person name="Galeotti C.L."/>
        </authorList>
    </citation>
    <scope>NUCLEOTIDE SEQUENCE [GENOMIC DNA]</scope>
    <source>
        <strain>ATCC 8585 / CBS 2359 / DSM 70799 / NBRC 1267 / NRRL Y-1140 / WM37</strain>
    </source>
</reference>
<proteinExistence type="predicted"/>
<dbReference type="EMBL" id="X07776">
    <property type="protein sequence ID" value="CAA30602.1"/>
    <property type="molecule type" value="Genomic_DNA"/>
</dbReference>
<dbReference type="PIR" id="S00959">
    <property type="entry name" value="S00959"/>
</dbReference>
<dbReference type="PaxDb" id="284590-P05467"/>
<dbReference type="InParanoid" id="P05467"/>
<geneLocation type="plasmid">
    <name>pGKl-2</name>
</geneLocation>
<accession>P05467</accession>
<keyword id="KW-0614">Plasmid</keyword>
<comment type="function">
    <text>The presence of the two linear plasmids, termed pGKL1 and pGKL2, in strains of Kluyveromyces lactis confers the killer phenotype to the host cell, by promoting the secretion of a toxin able to inhibit the growth of sensitive strains.</text>
</comment>
<organism>
    <name type="scientific">Kluyveromyces lactis (strain ATCC 8585 / CBS 2359 / DSM 70799 / NBRC 1267 / NRRL Y-1140 / WM37)</name>
    <name type="common">Yeast</name>
    <name type="synonym">Candida sphaerica</name>
    <dbReference type="NCBI Taxonomy" id="284590"/>
    <lineage>
        <taxon>Eukaryota</taxon>
        <taxon>Fungi</taxon>
        <taxon>Dikarya</taxon>
        <taxon>Ascomycota</taxon>
        <taxon>Saccharomycotina</taxon>
        <taxon>Saccharomycetes</taxon>
        <taxon>Saccharomycetales</taxon>
        <taxon>Saccharomycetaceae</taxon>
        <taxon>Kluyveromyces</taxon>
    </lineage>
</organism>
<name>YKP1_KLULA</name>